<protein>
    <recommendedName>
        <fullName>Nucleoporin nup85</fullName>
    </recommendedName>
    <alternativeName>
        <fullName>Nuclear pore protein nup85</fullName>
    </alternativeName>
</protein>
<reference key="1">
    <citation type="journal article" date="2002" name="Nature">
        <title>The genome sequence of Schizosaccharomyces pombe.</title>
        <authorList>
            <person name="Wood V."/>
            <person name="Gwilliam R."/>
            <person name="Rajandream M.A."/>
            <person name="Lyne M.H."/>
            <person name="Lyne R."/>
            <person name="Stewart A."/>
            <person name="Sgouros J.G."/>
            <person name="Peat N."/>
            <person name="Hayles J."/>
            <person name="Baker S.G."/>
            <person name="Basham D."/>
            <person name="Bowman S."/>
            <person name="Brooks K."/>
            <person name="Brown D."/>
            <person name="Brown S."/>
            <person name="Chillingworth T."/>
            <person name="Churcher C.M."/>
            <person name="Collins M."/>
            <person name="Connor R."/>
            <person name="Cronin A."/>
            <person name="Davis P."/>
            <person name="Feltwell T."/>
            <person name="Fraser A."/>
            <person name="Gentles S."/>
            <person name="Goble A."/>
            <person name="Hamlin N."/>
            <person name="Harris D.E."/>
            <person name="Hidalgo J."/>
            <person name="Hodgson G."/>
            <person name="Holroyd S."/>
            <person name="Hornsby T."/>
            <person name="Howarth S."/>
            <person name="Huckle E.J."/>
            <person name="Hunt S."/>
            <person name="Jagels K."/>
            <person name="James K.D."/>
            <person name="Jones L."/>
            <person name="Jones M."/>
            <person name="Leather S."/>
            <person name="McDonald S."/>
            <person name="McLean J."/>
            <person name="Mooney P."/>
            <person name="Moule S."/>
            <person name="Mungall K.L."/>
            <person name="Murphy L.D."/>
            <person name="Niblett D."/>
            <person name="Odell C."/>
            <person name="Oliver K."/>
            <person name="O'Neil S."/>
            <person name="Pearson D."/>
            <person name="Quail M.A."/>
            <person name="Rabbinowitsch E."/>
            <person name="Rutherford K.M."/>
            <person name="Rutter S."/>
            <person name="Saunders D."/>
            <person name="Seeger K."/>
            <person name="Sharp S."/>
            <person name="Skelton J."/>
            <person name="Simmonds M.N."/>
            <person name="Squares R."/>
            <person name="Squares S."/>
            <person name="Stevens K."/>
            <person name="Taylor K."/>
            <person name="Taylor R.G."/>
            <person name="Tivey A."/>
            <person name="Walsh S.V."/>
            <person name="Warren T."/>
            <person name="Whitehead S."/>
            <person name="Woodward J.R."/>
            <person name="Volckaert G."/>
            <person name="Aert R."/>
            <person name="Robben J."/>
            <person name="Grymonprez B."/>
            <person name="Weltjens I."/>
            <person name="Vanstreels E."/>
            <person name="Rieger M."/>
            <person name="Schaefer M."/>
            <person name="Mueller-Auer S."/>
            <person name="Gabel C."/>
            <person name="Fuchs M."/>
            <person name="Duesterhoeft A."/>
            <person name="Fritzc C."/>
            <person name="Holzer E."/>
            <person name="Moestl D."/>
            <person name="Hilbert H."/>
            <person name="Borzym K."/>
            <person name="Langer I."/>
            <person name="Beck A."/>
            <person name="Lehrach H."/>
            <person name="Reinhardt R."/>
            <person name="Pohl T.M."/>
            <person name="Eger P."/>
            <person name="Zimmermann W."/>
            <person name="Wedler H."/>
            <person name="Wambutt R."/>
            <person name="Purnelle B."/>
            <person name="Goffeau A."/>
            <person name="Cadieu E."/>
            <person name="Dreano S."/>
            <person name="Gloux S."/>
            <person name="Lelaure V."/>
            <person name="Mottier S."/>
            <person name="Galibert F."/>
            <person name="Aves S.J."/>
            <person name="Xiang Z."/>
            <person name="Hunt C."/>
            <person name="Moore K."/>
            <person name="Hurst S.M."/>
            <person name="Lucas M."/>
            <person name="Rochet M."/>
            <person name="Gaillardin C."/>
            <person name="Tallada V.A."/>
            <person name="Garzon A."/>
            <person name="Thode G."/>
            <person name="Daga R.R."/>
            <person name="Cruzado L."/>
            <person name="Jimenez J."/>
            <person name="Sanchez M."/>
            <person name="del Rey F."/>
            <person name="Benito J."/>
            <person name="Dominguez A."/>
            <person name="Revuelta J.L."/>
            <person name="Moreno S."/>
            <person name="Armstrong J."/>
            <person name="Forsburg S.L."/>
            <person name="Cerutti L."/>
            <person name="Lowe T."/>
            <person name="McCombie W.R."/>
            <person name="Paulsen I."/>
            <person name="Potashkin J."/>
            <person name="Shpakovski G.V."/>
            <person name="Ussery D."/>
            <person name="Barrell B.G."/>
            <person name="Nurse P."/>
        </authorList>
    </citation>
    <scope>NUCLEOTIDE SEQUENCE [LARGE SCALE GENOMIC DNA]</scope>
    <source>
        <strain>972 / ATCC 24843</strain>
    </source>
</reference>
<reference key="2">
    <citation type="journal article" date="2004" name="Mol. Cell. Biol.">
        <title>The fission yeast Nup107-120 complex functionally interacts with the small GTPase Ran/Spi1 and is required for mRNA export, nuclear pore distribution, and proper cell division.</title>
        <authorList>
            <person name="Bai S.W."/>
            <person name="Rouquette J."/>
            <person name="Umeda M."/>
            <person name="Faigle W."/>
            <person name="Loew D."/>
            <person name="Sazer S."/>
            <person name="Doye V."/>
        </authorList>
    </citation>
    <scope>IDENTIFICATION IN NUP107-120 COMPLEX</scope>
    <scope>SUBCELLULAR LOCATION</scope>
</reference>
<reference key="3">
    <citation type="journal article" date="2004" name="Yeast">
        <title>Identification of genes encoding putative nucleoporins and transport factors in the fission yeast Schizosaccharomyces pombe: a deletion analysis.</title>
        <authorList>
            <person name="Chen X.Q."/>
            <person name="Du X."/>
            <person name="Liu J."/>
            <person name="Balasubramanian M.K."/>
            <person name="Balasundaram D."/>
        </authorList>
    </citation>
    <scope>FUNCTION</scope>
    <scope>SUBCELLULAR LOCATION</scope>
</reference>
<reference key="4">
    <citation type="journal article" date="2006" name="Nat. Biotechnol.">
        <title>ORFeome cloning and global analysis of protein localization in the fission yeast Schizosaccharomyces pombe.</title>
        <authorList>
            <person name="Matsuyama A."/>
            <person name="Arai R."/>
            <person name="Yashiroda Y."/>
            <person name="Shirai A."/>
            <person name="Kamata A."/>
            <person name="Sekido S."/>
            <person name="Kobayashi Y."/>
            <person name="Hashimoto A."/>
            <person name="Hamamoto M."/>
            <person name="Hiraoka Y."/>
            <person name="Horinouchi S."/>
            <person name="Yoshida M."/>
        </authorList>
    </citation>
    <scope>SUBCELLULAR LOCATION [LARGE SCALE ANALYSIS]</scope>
</reference>
<organism>
    <name type="scientific">Schizosaccharomyces pombe (strain 972 / ATCC 24843)</name>
    <name type="common">Fission yeast</name>
    <dbReference type="NCBI Taxonomy" id="284812"/>
    <lineage>
        <taxon>Eukaryota</taxon>
        <taxon>Fungi</taxon>
        <taxon>Dikarya</taxon>
        <taxon>Ascomycota</taxon>
        <taxon>Taphrinomycotina</taxon>
        <taxon>Schizosaccharomycetes</taxon>
        <taxon>Schizosaccharomycetales</taxon>
        <taxon>Schizosaccharomycetaceae</taxon>
        <taxon>Schizosaccharomyces</taxon>
    </lineage>
</organism>
<keyword id="KW-0963">Cytoplasm</keyword>
<keyword id="KW-0206">Cytoskeleton</keyword>
<keyword id="KW-0509">mRNA transport</keyword>
<keyword id="KW-0906">Nuclear pore complex</keyword>
<keyword id="KW-0539">Nucleus</keyword>
<keyword id="KW-0653">Protein transport</keyword>
<keyword id="KW-1185">Reference proteome</keyword>
<keyword id="KW-0811">Translocation</keyword>
<keyword id="KW-0813">Transport</keyword>
<accession>Q9UUE5</accession>
<dbReference type="EMBL" id="CU329671">
    <property type="protein sequence ID" value="CAB52802.1"/>
    <property type="molecule type" value="Genomic_DNA"/>
</dbReference>
<dbReference type="PIR" id="T39727">
    <property type="entry name" value="T39727"/>
</dbReference>
<dbReference type="RefSeq" id="NP_595893.1">
    <property type="nucleotide sequence ID" value="NM_001021800.2"/>
</dbReference>
<dbReference type="SMR" id="Q9UUE5"/>
<dbReference type="BioGRID" id="276378">
    <property type="interactions" value="12"/>
</dbReference>
<dbReference type="FunCoup" id="Q9UUE5">
    <property type="interactions" value="115"/>
</dbReference>
<dbReference type="IntAct" id="Q9UUE5">
    <property type="interactions" value="3"/>
</dbReference>
<dbReference type="STRING" id="284812.Q9UUE5"/>
<dbReference type="iPTMnet" id="Q9UUE5"/>
<dbReference type="PaxDb" id="4896-SPBC17G9.04c.1"/>
<dbReference type="EnsemblFungi" id="SPBC17G9.04c.1">
    <property type="protein sequence ID" value="SPBC17G9.04c.1:pep"/>
    <property type="gene ID" value="SPBC17G9.04c"/>
</dbReference>
<dbReference type="GeneID" id="2539829"/>
<dbReference type="KEGG" id="spo:2539829"/>
<dbReference type="PomBase" id="SPBC17G9.04c">
    <property type="gene designation" value="nup85"/>
</dbReference>
<dbReference type="VEuPathDB" id="FungiDB:SPBC17G9.04c"/>
<dbReference type="eggNOG" id="KOG2271">
    <property type="taxonomic scope" value="Eukaryota"/>
</dbReference>
<dbReference type="HOGENOM" id="CLU_019986_0_0_1"/>
<dbReference type="InParanoid" id="Q9UUE5"/>
<dbReference type="OMA" id="ELMEWLN"/>
<dbReference type="PhylomeDB" id="Q9UUE5"/>
<dbReference type="Reactome" id="R-SPO-159227">
    <property type="pathway name" value="Transport of the SLBP independent Mature mRNA"/>
</dbReference>
<dbReference type="Reactome" id="R-SPO-159231">
    <property type="pathway name" value="Transport of Mature mRNA Derived from an Intronless Transcript"/>
</dbReference>
<dbReference type="Reactome" id="R-SPO-159236">
    <property type="pathway name" value="Transport of Mature mRNA derived from an Intron-Containing Transcript"/>
</dbReference>
<dbReference type="Reactome" id="R-SPO-3371453">
    <property type="pathway name" value="Regulation of HSF1-mediated heat shock response"/>
</dbReference>
<dbReference type="Reactome" id="R-SPO-4085377">
    <property type="pathway name" value="SUMOylation of SUMOylation proteins"/>
</dbReference>
<dbReference type="Reactome" id="R-SPO-4551638">
    <property type="pathway name" value="SUMOylation of chromatin organization proteins"/>
</dbReference>
<dbReference type="Reactome" id="R-SPO-4570464">
    <property type="pathway name" value="SUMOylation of RNA binding proteins"/>
</dbReference>
<dbReference type="Reactome" id="R-SPO-5578749">
    <property type="pathway name" value="Transcriptional regulation by small RNAs"/>
</dbReference>
<dbReference type="Reactome" id="R-SPO-9615933">
    <property type="pathway name" value="Postmitotic nuclear pore complex (NPC) reformation"/>
</dbReference>
<dbReference type="PRO" id="PR:Q9UUE5"/>
<dbReference type="Proteomes" id="UP000002485">
    <property type="component" value="Chromosome II"/>
</dbReference>
<dbReference type="GO" id="GO:0005829">
    <property type="term" value="C:cytosol"/>
    <property type="evidence" value="ECO:0007005"/>
    <property type="project" value="PomBase"/>
</dbReference>
<dbReference type="GO" id="GO:0000791">
    <property type="term" value="C:euchromatin"/>
    <property type="evidence" value="ECO:0000314"/>
    <property type="project" value="PomBase"/>
</dbReference>
<dbReference type="GO" id="GO:0000792">
    <property type="term" value="C:heterochromatin"/>
    <property type="evidence" value="ECO:0000314"/>
    <property type="project" value="PomBase"/>
</dbReference>
<dbReference type="GO" id="GO:0005635">
    <property type="term" value="C:nuclear envelope"/>
    <property type="evidence" value="ECO:0007005"/>
    <property type="project" value="PomBase"/>
</dbReference>
<dbReference type="GO" id="GO:0034399">
    <property type="term" value="C:nuclear periphery"/>
    <property type="evidence" value="ECO:0000314"/>
    <property type="project" value="PomBase"/>
</dbReference>
<dbReference type="GO" id="GO:0005643">
    <property type="term" value="C:nuclear pore"/>
    <property type="evidence" value="ECO:0000314"/>
    <property type="project" value="PomBase"/>
</dbReference>
<dbReference type="GO" id="GO:0031080">
    <property type="term" value="C:nuclear pore outer ring"/>
    <property type="evidence" value="ECO:0000314"/>
    <property type="project" value="PomBase"/>
</dbReference>
<dbReference type="GO" id="GO:0140602">
    <property type="term" value="C:nucleolar peripheral inclusion body"/>
    <property type="evidence" value="ECO:0000314"/>
    <property type="project" value="PomBase"/>
</dbReference>
<dbReference type="GO" id="GO:0005634">
    <property type="term" value="C:nucleus"/>
    <property type="evidence" value="ECO:0007005"/>
    <property type="project" value="PomBase"/>
</dbReference>
<dbReference type="GO" id="GO:0005816">
    <property type="term" value="C:spindle pole body"/>
    <property type="evidence" value="ECO:0007669"/>
    <property type="project" value="UniProtKB-SubCell"/>
</dbReference>
<dbReference type="GO" id="GO:1990188">
    <property type="term" value="F:euchromatin binding"/>
    <property type="evidence" value="ECO:0000314"/>
    <property type="project" value="PomBase"/>
</dbReference>
<dbReference type="GO" id="GO:0017056">
    <property type="term" value="F:structural constituent of nuclear pore"/>
    <property type="evidence" value="ECO:0000318"/>
    <property type="project" value="GO_Central"/>
</dbReference>
<dbReference type="GO" id="GO:0006406">
    <property type="term" value="P:mRNA export from nucleus"/>
    <property type="evidence" value="ECO:0000315"/>
    <property type="project" value="PomBase"/>
</dbReference>
<dbReference type="GO" id="GO:0045893">
    <property type="term" value="P:positive regulation of DNA-templated transcription"/>
    <property type="evidence" value="ECO:0000318"/>
    <property type="project" value="GO_Central"/>
</dbReference>
<dbReference type="GO" id="GO:0006606">
    <property type="term" value="P:protein import into nucleus"/>
    <property type="evidence" value="ECO:0000318"/>
    <property type="project" value="GO_Central"/>
</dbReference>
<dbReference type="GO" id="GO:0000054">
    <property type="term" value="P:ribosomal subunit export from nucleus"/>
    <property type="evidence" value="ECO:0000266"/>
    <property type="project" value="PomBase"/>
</dbReference>
<dbReference type="InterPro" id="IPR011502">
    <property type="entry name" value="Nucleoporin_Nup85"/>
</dbReference>
<dbReference type="PANTHER" id="PTHR13373">
    <property type="entry name" value="FROUNT PROTEIN-RELATED"/>
    <property type="match status" value="1"/>
</dbReference>
<dbReference type="PANTHER" id="PTHR13373:SF21">
    <property type="entry name" value="NUCLEAR PORE COMPLEX PROTEIN NUP85"/>
    <property type="match status" value="1"/>
</dbReference>
<dbReference type="Pfam" id="PF07575">
    <property type="entry name" value="Nucleopor_Nup85"/>
    <property type="match status" value="1"/>
</dbReference>
<name>NUP85_SCHPO</name>
<gene>
    <name type="primary">nup85</name>
    <name type="ORF">SPBC17G9.04c</name>
</gene>
<comment type="function">
    <text evidence="1">Functions as a component of the nuclear pore complex (NPC). NPC components, collectively referred to as nucleoporins (NUPs), can play the role of both NPC structural components and of docking or interaction partners for transiently associated nuclear transport factors. Active directional transport is assured by both, a Phe-Gly (FG) repeat affinity gradient for these transport factors across the NPC and a transport cofactor concentration gradient across the nuclear envelope.</text>
</comment>
<comment type="subunit">
    <text evidence="1">Component of the nuclear pore complex (NPC). NPC constitutes the exclusive means of nucleocytoplasmic transport. NPCs allow the passive diffusion of ions and small molecules and the active, nuclear transport receptor-mediated bidirectional transport of macromolecules such as proteins, RNAs, ribonucleoparticles (RNPs), and ribosomal subunits across the nuclear envelope. Due to its 8-fold rotational symmetry, all subunits are present with 8 copies or multiples thereof.</text>
</comment>
<comment type="subcellular location">
    <subcellularLocation>
        <location evidence="3">Cytoplasm</location>
    </subcellularLocation>
    <subcellularLocation>
        <location evidence="1 3">Nucleus envelope</location>
    </subcellularLocation>
    <subcellularLocation>
        <location evidence="3">Cytoplasm</location>
        <location evidence="3">Cytoskeleton</location>
        <location evidence="3">Microtubule organizing center</location>
        <location evidence="3">Spindle pole body</location>
    </subcellularLocation>
    <subcellularLocation>
        <location evidence="2">Nucleus</location>
        <location evidence="2">Nuclear pore complex</location>
    </subcellularLocation>
    <text evidence="3">Localizes to the nuclear envelope and spindle pole body.</text>
</comment>
<comment type="similarity">
    <text evidence="4">Belongs to the nucleoporin Nup85 family.</text>
</comment>
<evidence type="ECO:0000269" key="1">
    <source>
    </source>
</evidence>
<evidence type="ECO:0000269" key="2">
    <source>
    </source>
</evidence>
<evidence type="ECO:0000269" key="3">
    <source>
    </source>
</evidence>
<evidence type="ECO:0000305" key="4"/>
<proteinExistence type="evidence at protein level"/>
<sequence length="675" mass="78022">MESSDEVDLPVYHLQNAPIENGKLNDWRSKGRTVAFKLHPFLRKGLAYINNKEFDENTLKSDKFEEVESLVYEFSTPSTLIEPNYLLTAWHELWEELQDTYMTPILDSEANLLLLTQFYGKISSLFRSKIIQVLEELQSRINEGEKDCQPVLDSLWEVESAWRCAEAIYFPPSSPYTLSTGILDWVNAYDPQPIADDGLEIMAYRIPYQHPEFWPYVNKTAIRGLFEQTISCLEMSGLTKEWPVLKETVDELIDILRYSPCTHQKRIRSVSDFERRWKLWRSRLANLRHVVKKHRDIDSEVLDDFVVLLDILNGNKEVIMLSCAHWQEYFSALAFLYGPLDCKNPEDISLLYQLATGEDSKFYVNGTIEYEQICVNLCSNEPLNAIKHAYLLDLGLAVHLADLLSKSGHLRDYITEEYPITLREHLILEYGQCVLESRNLWQTSFAYWKCVADSGYQRIKACIPYVPLSDVDAKETALQLCKQLKLRDEAQLVLTHWADELIARNHYGEALIALDNAANYSALNRVTWELFDICIAEKKSFSPDKDELLYELFSSPKACTPTLASIISPAATIHQYFFYLQHKKELNASELLVGLLTMVDFPSSRFPKLLELLHEFLNNPLQSNSTDFKLSLVNVYDCIAVLQDQQSTVKDQQLLLSIHERLSSAISWYFLHLKK</sequence>
<feature type="chain" id="PRO_0000290672" description="Nucleoporin nup85">
    <location>
        <begin position="1"/>
        <end position="675"/>
    </location>
</feature>